<evidence type="ECO:0000250" key="1">
    <source>
        <dbReference type="UniProtKB" id="P10175"/>
    </source>
</evidence>
<evidence type="ECO:0000250" key="2">
    <source>
        <dbReference type="UniProtKB" id="P10176"/>
    </source>
</evidence>
<evidence type="ECO:0000305" key="3"/>
<proteinExistence type="inferred from homology"/>
<organism>
    <name type="scientific">Hylobates agilis</name>
    <name type="common">Agile gibbon</name>
    <dbReference type="NCBI Taxonomy" id="9579"/>
    <lineage>
        <taxon>Eukaryota</taxon>
        <taxon>Metazoa</taxon>
        <taxon>Chordata</taxon>
        <taxon>Craniata</taxon>
        <taxon>Vertebrata</taxon>
        <taxon>Euteleostomi</taxon>
        <taxon>Mammalia</taxon>
        <taxon>Eutheria</taxon>
        <taxon>Euarchontoglires</taxon>
        <taxon>Primates</taxon>
        <taxon>Haplorrhini</taxon>
        <taxon>Catarrhini</taxon>
        <taxon>Hylobatidae</taxon>
        <taxon>Hylobates</taxon>
    </lineage>
</organism>
<accession>Q862Z9</accession>
<feature type="transit peptide" description="Mitochondrion" evidence="2">
    <location>
        <begin position="1"/>
        <end position="25"/>
    </location>
</feature>
<feature type="chain" id="PRO_0000006187" description="Cytochrome c oxidase subunit 8A, mitochondrial">
    <location>
        <begin position="26"/>
        <end position="69"/>
    </location>
</feature>
<feature type="topological domain" description="Mitochondrial matrix" evidence="2">
    <location>
        <begin position="26"/>
        <end position="36"/>
    </location>
</feature>
<feature type="transmembrane region" description="Helical" evidence="1">
    <location>
        <begin position="37"/>
        <end position="60"/>
    </location>
</feature>
<feature type="topological domain" description="Mitochondrial intermembrane" evidence="2">
    <location>
        <begin position="61"/>
        <end position="69"/>
    </location>
</feature>
<feature type="short sequence motif" description="SIFI-degron" evidence="2">
    <location>
        <begin position="2"/>
        <end position="19"/>
    </location>
</feature>
<protein>
    <recommendedName>
        <fullName>Cytochrome c oxidase subunit 8A, mitochondrial</fullName>
    </recommendedName>
    <alternativeName>
        <fullName>Cytochrome c oxidase polypeptide VIII-liver/heart</fullName>
    </alternativeName>
    <alternativeName>
        <fullName>Cytochrome c oxidase subunit 8-2</fullName>
    </alternativeName>
</protein>
<sequence>MSVLTPLLLRGLTGSARRLPVPRAKIHSLPPEEKLGIMELAVGLTSCFVTFLLPAGWILSHLETYRRPE</sequence>
<gene>
    <name type="primary">COX8A</name>
    <name type="synonym">COX8</name>
    <name type="synonym">COX8L</name>
</gene>
<keyword id="KW-0472">Membrane</keyword>
<keyword id="KW-0496">Mitochondrion</keyword>
<keyword id="KW-0999">Mitochondrion inner membrane</keyword>
<keyword id="KW-0809">Transit peptide</keyword>
<keyword id="KW-0812">Transmembrane</keyword>
<keyword id="KW-1133">Transmembrane helix</keyword>
<keyword id="KW-0832">Ubl conjugation</keyword>
<dbReference type="EMBL" id="AY254814">
    <property type="protein sequence ID" value="AAP32246.1"/>
    <property type="molecule type" value="Genomic_DNA"/>
</dbReference>
<dbReference type="EMBL" id="AY254813">
    <property type="protein sequence ID" value="AAP32246.1"/>
    <property type="status" value="JOINED"/>
    <property type="molecule type" value="Genomic_DNA"/>
</dbReference>
<dbReference type="SMR" id="Q862Z9"/>
<dbReference type="UniPathway" id="UPA00705"/>
<dbReference type="GO" id="GO:0005743">
    <property type="term" value="C:mitochondrial inner membrane"/>
    <property type="evidence" value="ECO:0007669"/>
    <property type="project" value="UniProtKB-SubCell"/>
</dbReference>
<dbReference type="GO" id="GO:0045277">
    <property type="term" value="C:respiratory chain complex IV"/>
    <property type="evidence" value="ECO:0007669"/>
    <property type="project" value="InterPro"/>
</dbReference>
<dbReference type="GO" id="GO:0006123">
    <property type="term" value="P:mitochondrial electron transport, cytochrome c to oxygen"/>
    <property type="evidence" value="ECO:0007669"/>
    <property type="project" value="InterPro"/>
</dbReference>
<dbReference type="CDD" id="cd00930">
    <property type="entry name" value="Cyt_c_Oxidase_VIII"/>
    <property type="match status" value="1"/>
</dbReference>
<dbReference type="FunFam" id="4.10.81.10:FF:000001">
    <property type="entry name" value="Cytochrome c oxidase subunit 8B, mitochondrial"/>
    <property type="match status" value="1"/>
</dbReference>
<dbReference type="Gene3D" id="4.10.81.10">
    <property type="entry name" value="Cytochrome c oxidase, subunit 8"/>
    <property type="match status" value="1"/>
</dbReference>
<dbReference type="InterPro" id="IPR003205">
    <property type="entry name" value="Cyt_c_oxidase_su8"/>
</dbReference>
<dbReference type="InterPro" id="IPR036548">
    <property type="entry name" value="Cyt_c_oxidase_su8_sf"/>
</dbReference>
<dbReference type="PANTHER" id="PTHR16717">
    <property type="entry name" value="CYTOCHROME C OXIDASE POLYPEPTIDE VIII"/>
    <property type="match status" value="1"/>
</dbReference>
<dbReference type="PANTHER" id="PTHR16717:SF1">
    <property type="entry name" value="CYTOCHROME C OXIDASE SUBUNIT 8A, MITOCHONDRIAL"/>
    <property type="match status" value="1"/>
</dbReference>
<dbReference type="Pfam" id="PF02285">
    <property type="entry name" value="COX8"/>
    <property type="match status" value="1"/>
</dbReference>
<dbReference type="SUPFAM" id="SSF81431">
    <property type="entry name" value="Mitochondrial cytochrome c oxidase subunit VIIIb (aka IX)"/>
    <property type="match status" value="1"/>
</dbReference>
<reference key="1">
    <citation type="journal article" date="2003" name="Proc. Natl. Acad. Sci. U.S.A.">
        <title>Adaptive evolution of cytochrome c oxidase subunit VIII in anthropoid primates.</title>
        <authorList>
            <person name="Goldberg A."/>
            <person name="Wildman D.E."/>
            <person name="Schmidt T.R."/>
            <person name="Huttemann M."/>
            <person name="Goodman M."/>
            <person name="Weiss M.L."/>
            <person name="Grossman L.I."/>
        </authorList>
    </citation>
    <scope>NUCLEOTIDE SEQUENCE [GENOMIC DNA]</scope>
</reference>
<name>COX8A_HYLAG</name>
<comment type="function">
    <text evidence="1">Component of the cytochrome c oxidase, the last enzyme in the mitochondrial electron transport chain which drives oxidative phosphorylation. The respiratory chain contains 3 multisubunit complexes succinate dehydrogenase (complex II, CII), ubiquinol-cytochrome c oxidoreductase (cytochrome b-c1 complex, complex III, CIII) and cytochrome c oxidase (complex IV, CIV), that cooperate to transfer electrons derived from NADH and succinate to molecular oxygen, creating an electrochemical gradient over the inner membrane that drives transmembrane transport and the ATP synthase. Cytochrome c oxidase is the component of the respiratory chain that catalyzes the reduction of oxygen to water. Electrons originating from reduced cytochrome c in the intermembrane space (IMS) are transferred via the dinuclear copper A center (CU(A)) of subunit 2 and heme A of subunit 1 to the active site in subunit 1, a binuclear center (BNC) formed by heme A3 and copper B (CU(B)). The BNC reduces molecular oxygen to 2 water molecules using 4 electrons from cytochrome c in the IMS and 4 protons from the mitochondrial matrix.</text>
</comment>
<comment type="pathway">
    <text evidence="1">Energy metabolism; oxidative phosphorylation.</text>
</comment>
<comment type="subunit">
    <text evidence="2">Component of the cytochrome c oxidase (complex IV, CIV), a multisubunit enzyme composed of 14 subunits. The complex is composed of a catalytic core of 3 subunits MT-CO1, MT-CO2 and MT-CO3, encoded in the mitochondrial DNA, and 11 supernumerary subunits COX4I, COX5A, COX5B, COX6A, COX6B, COX6C, COX7A, COX7B, COX7C, COX8 and NDUFA4, which are encoded in the nuclear genome. The complex exists as a monomer or a dimer and forms supercomplexes (SCs) in the inner mitochondrial membrane with NADH-ubiquinone oxidoreductase (complex I, CI) and ubiquinol-cytochrome c oxidoreductase (cytochrome b-c1 complex, complex III, CIII), resulting in different assemblies (supercomplex SCI(1)III(2)IV(1) and megacomplex MCI(2)III(2)IV(2)).</text>
</comment>
<comment type="subcellular location">
    <subcellularLocation>
        <location evidence="2">Mitochondrion inner membrane</location>
        <topology evidence="2">Single-pass membrane protein</topology>
    </subcellularLocation>
</comment>
<comment type="PTM">
    <text evidence="2">In response to mitochondrial stress, the precursor protein is ubiquitinated by the SIFI complex in the cytoplasm before mitochondrial import, leading to its degradation. Within the SIFI complex, UBR4 initiates ubiquitin chain that are further elongated or branched by KCMF1.</text>
</comment>
<comment type="similarity">
    <text evidence="3">Belongs to the cytochrome c oxidase VIII family.</text>
</comment>